<keyword id="KW-1185">Reference proteome</keyword>
<keyword id="KW-0687">Ribonucleoprotein</keyword>
<keyword id="KW-0689">Ribosomal protein</keyword>
<comment type="function">
    <text evidence="1">Forms part of the ribosomal stalk which helps the ribosome interact with GTP-bound translation factors. Is thus essential for accurate translation.</text>
</comment>
<comment type="subunit">
    <text evidence="1">Homodimer. Part of the ribosomal stalk of the 50S ribosomal subunit. Forms a multimeric L10(L12)X complex, where L10 forms an elongated spine to which 2 to 4 L12 dimers bind in a sequential fashion. Binds GTP-bound translation factors.</text>
</comment>
<comment type="similarity">
    <text evidence="1">Belongs to the bacterial ribosomal protein bL12 family.</text>
</comment>
<organism>
    <name type="scientific">Corynebacterium glutamicum (strain ATCC 13032 / DSM 20300 / JCM 1318 / BCRC 11384 / CCUG 27702 / LMG 3730 / NBRC 12168 / NCIMB 10025 / NRRL B-2784 / 534)</name>
    <dbReference type="NCBI Taxonomy" id="196627"/>
    <lineage>
        <taxon>Bacteria</taxon>
        <taxon>Bacillati</taxon>
        <taxon>Actinomycetota</taxon>
        <taxon>Actinomycetes</taxon>
        <taxon>Mycobacteriales</taxon>
        <taxon>Corynebacteriaceae</taxon>
        <taxon>Corynebacterium</taxon>
    </lineage>
</organism>
<gene>
    <name evidence="1" type="primary">rplL</name>
    <name type="ordered locus">Cgl0486</name>
    <name type="ordered locus">cg0573</name>
</gene>
<reference key="1">
    <citation type="journal article" date="2003" name="Appl. Microbiol. Biotechnol.">
        <title>The Corynebacterium glutamicum genome: features and impacts on biotechnological processes.</title>
        <authorList>
            <person name="Ikeda M."/>
            <person name="Nakagawa S."/>
        </authorList>
    </citation>
    <scope>NUCLEOTIDE SEQUENCE [LARGE SCALE GENOMIC DNA]</scope>
    <source>
        <strain>ATCC 13032 / DSM 20300 / JCM 1318 / BCRC 11384 / CCUG 27702 / LMG 3730 / NBRC 12168 / NCIMB 10025 / NRRL B-2784 / 534</strain>
    </source>
</reference>
<reference key="2">
    <citation type="journal article" date="2003" name="J. Biotechnol.">
        <title>The complete Corynebacterium glutamicum ATCC 13032 genome sequence and its impact on the production of L-aspartate-derived amino acids and vitamins.</title>
        <authorList>
            <person name="Kalinowski J."/>
            <person name="Bathe B."/>
            <person name="Bartels D."/>
            <person name="Bischoff N."/>
            <person name="Bott M."/>
            <person name="Burkovski A."/>
            <person name="Dusch N."/>
            <person name="Eggeling L."/>
            <person name="Eikmanns B.J."/>
            <person name="Gaigalat L."/>
            <person name="Goesmann A."/>
            <person name="Hartmann M."/>
            <person name="Huthmacher K."/>
            <person name="Kraemer R."/>
            <person name="Linke B."/>
            <person name="McHardy A.C."/>
            <person name="Meyer F."/>
            <person name="Moeckel B."/>
            <person name="Pfefferle W."/>
            <person name="Puehler A."/>
            <person name="Rey D.A."/>
            <person name="Rueckert C."/>
            <person name="Rupp O."/>
            <person name="Sahm H."/>
            <person name="Wendisch V.F."/>
            <person name="Wiegraebe I."/>
            <person name="Tauch A."/>
        </authorList>
    </citation>
    <scope>NUCLEOTIDE SEQUENCE [LARGE SCALE GENOMIC DNA]</scope>
    <source>
        <strain>ATCC 13032 / DSM 20300 / JCM 1318 / BCRC 11384 / CCUG 27702 / LMG 3730 / NBRC 12168 / NCIMB 10025 / NRRL B-2784 / 534</strain>
    </source>
</reference>
<evidence type="ECO:0000255" key="1">
    <source>
        <dbReference type="HAMAP-Rule" id="MF_00368"/>
    </source>
</evidence>
<evidence type="ECO:0000305" key="2"/>
<name>RL7_CORGL</name>
<dbReference type="EMBL" id="BA000036">
    <property type="protein sequence ID" value="BAB97879.1"/>
    <property type="molecule type" value="Genomic_DNA"/>
</dbReference>
<dbReference type="EMBL" id="BX927149">
    <property type="protein sequence ID" value="CAF19200.1"/>
    <property type="molecule type" value="Genomic_DNA"/>
</dbReference>
<dbReference type="RefSeq" id="NP_599731.1">
    <property type="nucleotide sequence ID" value="NC_003450.3"/>
</dbReference>
<dbReference type="RefSeq" id="WP_003854210.1">
    <property type="nucleotide sequence ID" value="NC_006958.1"/>
</dbReference>
<dbReference type="SMR" id="Q8NT28"/>
<dbReference type="STRING" id="196627.cg0573"/>
<dbReference type="GeneID" id="1021491"/>
<dbReference type="KEGG" id="cgb:cg0573"/>
<dbReference type="KEGG" id="cgl:Cgl0486"/>
<dbReference type="PATRIC" id="fig|196627.13.peg.484"/>
<dbReference type="eggNOG" id="COG0222">
    <property type="taxonomic scope" value="Bacteria"/>
</dbReference>
<dbReference type="HOGENOM" id="CLU_086499_3_0_11"/>
<dbReference type="OrthoDB" id="9811748at2"/>
<dbReference type="BioCyc" id="CORYNE:G18NG-10048-MONOMER"/>
<dbReference type="Proteomes" id="UP000000582">
    <property type="component" value="Chromosome"/>
</dbReference>
<dbReference type="Proteomes" id="UP000001009">
    <property type="component" value="Chromosome"/>
</dbReference>
<dbReference type="GO" id="GO:0022625">
    <property type="term" value="C:cytosolic large ribosomal subunit"/>
    <property type="evidence" value="ECO:0007669"/>
    <property type="project" value="TreeGrafter"/>
</dbReference>
<dbReference type="GO" id="GO:0003729">
    <property type="term" value="F:mRNA binding"/>
    <property type="evidence" value="ECO:0007669"/>
    <property type="project" value="TreeGrafter"/>
</dbReference>
<dbReference type="GO" id="GO:0003735">
    <property type="term" value="F:structural constituent of ribosome"/>
    <property type="evidence" value="ECO:0007669"/>
    <property type="project" value="InterPro"/>
</dbReference>
<dbReference type="GO" id="GO:0006412">
    <property type="term" value="P:translation"/>
    <property type="evidence" value="ECO:0007669"/>
    <property type="project" value="UniProtKB-UniRule"/>
</dbReference>
<dbReference type="CDD" id="cd00387">
    <property type="entry name" value="Ribosomal_L7_L12"/>
    <property type="match status" value="1"/>
</dbReference>
<dbReference type="FunFam" id="1.20.5.710:FF:000005">
    <property type="entry name" value="50S ribosomal protein L7/L12"/>
    <property type="match status" value="1"/>
</dbReference>
<dbReference type="FunFam" id="3.30.1390.10:FF:000001">
    <property type="entry name" value="50S ribosomal protein L7/L12"/>
    <property type="match status" value="1"/>
</dbReference>
<dbReference type="Gene3D" id="3.30.1390.10">
    <property type="match status" value="1"/>
</dbReference>
<dbReference type="Gene3D" id="1.20.5.710">
    <property type="entry name" value="Single helix bin"/>
    <property type="match status" value="1"/>
</dbReference>
<dbReference type="HAMAP" id="MF_00368">
    <property type="entry name" value="Ribosomal_bL12"/>
    <property type="match status" value="1"/>
</dbReference>
<dbReference type="InterPro" id="IPR000206">
    <property type="entry name" value="Ribosomal_bL12"/>
</dbReference>
<dbReference type="InterPro" id="IPR013823">
    <property type="entry name" value="Ribosomal_bL12_C"/>
</dbReference>
<dbReference type="InterPro" id="IPR014719">
    <property type="entry name" value="Ribosomal_bL12_C/ClpS-like"/>
</dbReference>
<dbReference type="InterPro" id="IPR008932">
    <property type="entry name" value="Ribosomal_bL12_oligo"/>
</dbReference>
<dbReference type="InterPro" id="IPR036235">
    <property type="entry name" value="Ribosomal_bL12_oligo_N_sf"/>
</dbReference>
<dbReference type="NCBIfam" id="TIGR00855">
    <property type="entry name" value="L12"/>
    <property type="match status" value="1"/>
</dbReference>
<dbReference type="PANTHER" id="PTHR45987">
    <property type="entry name" value="39S RIBOSOMAL PROTEIN L12"/>
    <property type="match status" value="1"/>
</dbReference>
<dbReference type="PANTHER" id="PTHR45987:SF4">
    <property type="entry name" value="LARGE RIBOSOMAL SUBUNIT PROTEIN BL12M"/>
    <property type="match status" value="1"/>
</dbReference>
<dbReference type="Pfam" id="PF00542">
    <property type="entry name" value="Ribosomal_L12"/>
    <property type="match status" value="1"/>
</dbReference>
<dbReference type="Pfam" id="PF16320">
    <property type="entry name" value="Ribosomal_L12_N"/>
    <property type="match status" value="1"/>
</dbReference>
<dbReference type="SUPFAM" id="SSF54736">
    <property type="entry name" value="ClpS-like"/>
    <property type="match status" value="1"/>
</dbReference>
<dbReference type="SUPFAM" id="SSF48300">
    <property type="entry name" value="Ribosomal protein L7/12, oligomerisation (N-terminal) domain"/>
    <property type="match status" value="1"/>
</dbReference>
<protein>
    <recommendedName>
        <fullName evidence="1">Large ribosomal subunit protein bL12</fullName>
    </recommendedName>
    <alternativeName>
        <fullName evidence="2">50S ribosomal protein L7/L12</fullName>
    </alternativeName>
</protein>
<accession>Q8NT28</accession>
<feature type="chain" id="PRO_0000157524" description="Large ribosomal subunit protein bL12">
    <location>
        <begin position="1"/>
        <end position="128"/>
    </location>
</feature>
<sequence>MAKLTKDELIEAFKEMTLIELSEFVKEFEEVFDVTAAAPVAVAAAGAAGGEAAAAEEKDEFDVVLEDAGAKKIGVIKAVRELVSGLGLKEAKELVEGAPKAILEGANKDDAEAAKAKLEEAGAKVTLK</sequence>
<proteinExistence type="inferred from homology"/>